<organism>
    <name type="scientific">Francisella tularensis subsp. tularensis (strain SCHU S4 / Schu 4)</name>
    <dbReference type="NCBI Taxonomy" id="177416"/>
    <lineage>
        <taxon>Bacteria</taxon>
        <taxon>Pseudomonadati</taxon>
        <taxon>Pseudomonadota</taxon>
        <taxon>Gammaproteobacteria</taxon>
        <taxon>Thiotrichales</taxon>
        <taxon>Francisellaceae</taxon>
        <taxon>Francisella</taxon>
    </lineage>
</organism>
<gene>
    <name evidence="1" type="primary">uvrC</name>
    <name type="ordered locus">FTT_0777</name>
</gene>
<proteinExistence type="inferred from homology"/>
<sequence length="612" mass="70297">MIVDNSKDFDLKSFLANLTTHSGVYRMLDKHGEIIYVGKAKNLKNRVNSYFSKGAKDSKTLMMVEQIARIEITITPSDYEAYLLENNLIKQHRPKYNILFKDDKSYPYLVISRDKFPRVSFYRSKSAYKKGQCFGPYVSISSVKNTLNTIQKIFPIRQCENSYYKSRVRPCLQYQIKCCLAPCVGLVSQQQYDEQLAILKKFLAGKFSSVLEEISAKMYQASEDMEYEKAQVYRDQLVVLRKLQQQQIVDIQEDKTFDVIGIYMQDSYASIALLQIQNGDVVADRHWSIDAKGQDKTSIMHAFLSHFYLGDEIRNIWPKNIILSKVEFADITDLMNSISQKIGQAINWIIAPAADNLKWLKLAEVNARQKLNIYTSSKSQYQKRLESLKEFLELEKDIKRIECFDISHFQGEATIASCVVYTDDGEDRKSHRRYNIKDIKSGDDYAAIHQAVSRRVSSGLEADNLPDVMIIDGGKGQIHQAEAVFREYGIQDKVQLVSLGKGIERISGKEKIYKGFDDTEYTLDEHNPGFLLLRQVRDSAHDHAIKGQRKKVSANRQSSIIEEIEGVGPKRRKALMMYFGGWQELSRASVDEIAKVKGISKKLAQEIWECFH</sequence>
<dbReference type="EMBL" id="AJ749949">
    <property type="protein sequence ID" value="CAG45410.1"/>
    <property type="molecule type" value="Genomic_DNA"/>
</dbReference>
<dbReference type="RefSeq" id="WP_003020656.1">
    <property type="nucleotide sequence ID" value="NC_006570.2"/>
</dbReference>
<dbReference type="RefSeq" id="YP_169784.1">
    <property type="nucleotide sequence ID" value="NC_006570.2"/>
</dbReference>
<dbReference type="SMR" id="Q5NGQ8"/>
<dbReference type="IntAct" id="Q5NGQ8">
    <property type="interactions" value="3"/>
</dbReference>
<dbReference type="STRING" id="177416.FTT_0777"/>
<dbReference type="DNASU" id="3191927"/>
<dbReference type="EnsemblBacteria" id="CAG45410">
    <property type="protein sequence ID" value="CAG45410"/>
    <property type="gene ID" value="FTT_0777"/>
</dbReference>
<dbReference type="KEGG" id="ftu:FTT_0777"/>
<dbReference type="eggNOG" id="COG0322">
    <property type="taxonomic scope" value="Bacteria"/>
</dbReference>
<dbReference type="OrthoDB" id="9804933at2"/>
<dbReference type="Proteomes" id="UP000001174">
    <property type="component" value="Chromosome"/>
</dbReference>
<dbReference type="GO" id="GO:0005737">
    <property type="term" value="C:cytoplasm"/>
    <property type="evidence" value="ECO:0007669"/>
    <property type="project" value="UniProtKB-SubCell"/>
</dbReference>
<dbReference type="GO" id="GO:0009380">
    <property type="term" value="C:excinuclease repair complex"/>
    <property type="evidence" value="ECO:0007669"/>
    <property type="project" value="InterPro"/>
</dbReference>
<dbReference type="GO" id="GO:0003677">
    <property type="term" value="F:DNA binding"/>
    <property type="evidence" value="ECO:0007669"/>
    <property type="project" value="UniProtKB-UniRule"/>
</dbReference>
<dbReference type="GO" id="GO:0009381">
    <property type="term" value="F:excinuclease ABC activity"/>
    <property type="evidence" value="ECO:0007669"/>
    <property type="project" value="UniProtKB-UniRule"/>
</dbReference>
<dbReference type="GO" id="GO:0006289">
    <property type="term" value="P:nucleotide-excision repair"/>
    <property type="evidence" value="ECO:0007669"/>
    <property type="project" value="UniProtKB-UniRule"/>
</dbReference>
<dbReference type="GO" id="GO:0009432">
    <property type="term" value="P:SOS response"/>
    <property type="evidence" value="ECO:0007669"/>
    <property type="project" value="UniProtKB-UniRule"/>
</dbReference>
<dbReference type="CDD" id="cd10434">
    <property type="entry name" value="GIY-YIG_UvrC_Cho"/>
    <property type="match status" value="1"/>
</dbReference>
<dbReference type="FunFam" id="3.30.420.340:FF:000001">
    <property type="entry name" value="UvrABC system protein C"/>
    <property type="match status" value="1"/>
</dbReference>
<dbReference type="FunFam" id="3.40.1440.10:FF:000001">
    <property type="entry name" value="UvrABC system protein C"/>
    <property type="match status" value="1"/>
</dbReference>
<dbReference type="Gene3D" id="1.10.150.20">
    <property type="entry name" value="5' to 3' exonuclease, C-terminal subdomain"/>
    <property type="match status" value="1"/>
</dbReference>
<dbReference type="Gene3D" id="3.40.1440.10">
    <property type="entry name" value="GIY-YIG endonuclease"/>
    <property type="match status" value="1"/>
</dbReference>
<dbReference type="Gene3D" id="4.10.860.10">
    <property type="entry name" value="UVR domain"/>
    <property type="match status" value="1"/>
</dbReference>
<dbReference type="Gene3D" id="3.30.420.340">
    <property type="entry name" value="UvrC, RNAse H endonuclease domain"/>
    <property type="match status" value="1"/>
</dbReference>
<dbReference type="HAMAP" id="MF_00203">
    <property type="entry name" value="UvrC"/>
    <property type="match status" value="1"/>
</dbReference>
<dbReference type="InterPro" id="IPR000305">
    <property type="entry name" value="GIY-YIG_endonuc"/>
</dbReference>
<dbReference type="InterPro" id="IPR035901">
    <property type="entry name" value="GIY-YIG_endonuc_sf"/>
</dbReference>
<dbReference type="InterPro" id="IPR047296">
    <property type="entry name" value="GIY-YIG_UvrC_Cho"/>
</dbReference>
<dbReference type="InterPro" id="IPR010994">
    <property type="entry name" value="RuvA_2-like"/>
</dbReference>
<dbReference type="InterPro" id="IPR001943">
    <property type="entry name" value="UVR_dom"/>
</dbReference>
<dbReference type="InterPro" id="IPR036876">
    <property type="entry name" value="UVR_dom_sf"/>
</dbReference>
<dbReference type="InterPro" id="IPR050066">
    <property type="entry name" value="UvrABC_protein_C"/>
</dbReference>
<dbReference type="InterPro" id="IPR004791">
    <property type="entry name" value="UvrC"/>
</dbReference>
<dbReference type="InterPro" id="IPR001162">
    <property type="entry name" value="UvrC_RNase_H_dom"/>
</dbReference>
<dbReference type="InterPro" id="IPR038476">
    <property type="entry name" value="UvrC_RNase_H_dom_sf"/>
</dbReference>
<dbReference type="NCBIfam" id="TIGR00194">
    <property type="entry name" value="uvrC"/>
    <property type="match status" value="1"/>
</dbReference>
<dbReference type="PANTHER" id="PTHR30562:SF1">
    <property type="entry name" value="UVRABC SYSTEM PROTEIN C"/>
    <property type="match status" value="1"/>
</dbReference>
<dbReference type="PANTHER" id="PTHR30562">
    <property type="entry name" value="UVRC/OXIDOREDUCTASE"/>
    <property type="match status" value="1"/>
</dbReference>
<dbReference type="Pfam" id="PF01541">
    <property type="entry name" value="GIY-YIG"/>
    <property type="match status" value="1"/>
</dbReference>
<dbReference type="Pfam" id="PF14520">
    <property type="entry name" value="HHH_5"/>
    <property type="match status" value="1"/>
</dbReference>
<dbReference type="Pfam" id="PF02151">
    <property type="entry name" value="UVR"/>
    <property type="match status" value="1"/>
</dbReference>
<dbReference type="Pfam" id="PF22920">
    <property type="entry name" value="UvrC_RNaseH"/>
    <property type="match status" value="1"/>
</dbReference>
<dbReference type="Pfam" id="PF08459">
    <property type="entry name" value="UvrC_RNaseH_dom"/>
    <property type="match status" value="1"/>
</dbReference>
<dbReference type="SMART" id="SM00465">
    <property type="entry name" value="GIYc"/>
    <property type="match status" value="1"/>
</dbReference>
<dbReference type="SUPFAM" id="SSF46600">
    <property type="entry name" value="C-terminal UvrC-binding domain of UvrB"/>
    <property type="match status" value="1"/>
</dbReference>
<dbReference type="SUPFAM" id="SSF82771">
    <property type="entry name" value="GIY-YIG endonuclease"/>
    <property type="match status" value="1"/>
</dbReference>
<dbReference type="SUPFAM" id="SSF47781">
    <property type="entry name" value="RuvA domain 2-like"/>
    <property type="match status" value="1"/>
</dbReference>
<dbReference type="PROSITE" id="PS50164">
    <property type="entry name" value="GIY_YIG"/>
    <property type="match status" value="1"/>
</dbReference>
<dbReference type="PROSITE" id="PS50151">
    <property type="entry name" value="UVR"/>
    <property type="match status" value="1"/>
</dbReference>
<dbReference type="PROSITE" id="PS50165">
    <property type="entry name" value="UVRC"/>
    <property type="match status" value="1"/>
</dbReference>
<keyword id="KW-0963">Cytoplasm</keyword>
<keyword id="KW-0227">DNA damage</keyword>
<keyword id="KW-0228">DNA excision</keyword>
<keyword id="KW-0234">DNA repair</keyword>
<keyword id="KW-0267">Excision nuclease</keyword>
<keyword id="KW-1185">Reference proteome</keyword>
<keyword id="KW-0742">SOS response</keyword>
<accession>Q5NGQ8</accession>
<protein>
    <recommendedName>
        <fullName evidence="1">UvrABC system protein C</fullName>
        <shortName evidence="1">Protein UvrC</shortName>
    </recommendedName>
    <alternativeName>
        <fullName evidence="1">Excinuclease ABC subunit C</fullName>
    </alternativeName>
</protein>
<feature type="chain" id="PRO_0000227430" description="UvrABC system protein C">
    <location>
        <begin position="1"/>
        <end position="612"/>
    </location>
</feature>
<feature type="domain" description="GIY-YIG" evidence="1">
    <location>
        <begin position="20"/>
        <end position="98"/>
    </location>
</feature>
<feature type="domain" description="UVR" evidence="1">
    <location>
        <begin position="208"/>
        <end position="243"/>
    </location>
</feature>
<evidence type="ECO:0000255" key="1">
    <source>
        <dbReference type="HAMAP-Rule" id="MF_00203"/>
    </source>
</evidence>
<reference key="1">
    <citation type="journal article" date="2005" name="Nat. Genet.">
        <title>The complete genome sequence of Francisella tularensis, the causative agent of tularemia.</title>
        <authorList>
            <person name="Larsson P."/>
            <person name="Oyston P.C.F."/>
            <person name="Chain P."/>
            <person name="Chu M.C."/>
            <person name="Duffield M."/>
            <person name="Fuxelius H.-H."/>
            <person name="Garcia E."/>
            <person name="Haelltorp G."/>
            <person name="Johansson D."/>
            <person name="Isherwood K.E."/>
            <person name="Karp P.D."/>
            <person name="Larsson E."/>
            <person name="Liu Y."/>
            <person name="Michell S."/>
            <person name="Prior J."/>
            <person name="Prior R."/>
            <person name="Malfatti S."/>
            <person name="Sjoestedt A."/>
            <person name="Svensson K."/>
            <person name="Thompson N."/>
            <person name="Vergez L."/>
            <person name="Wagg J.K."/>
            <person name="Wren B.W."/>
            <person name="Lindler L.E."/>
            <person name="Andersson S.G.E."/>
            <person name="Forsman M."/>
            <person name="Titball R.W."/>
        </authorList>
    </citation>
    <scope>NUCLEOTIDE SEQUENCE [LARGE SCALE GENOMIC DNA]</scope>
    <source>
        <strain>SCHU S4 / Schu 4</strain>
    </source>
</reference>
<comment type="function">
    <text evidence="1">The UvrABC repair system catalyzes the recognition and processing of DNA lesions. UvrC both incises the 5' and 3' sides of the lesion. The N-terminal half is responsible for the 3' incision and the C-terminal half is responsible for the 5' incision.</text>
</comment>
<comment type="subunit">
    <text evidence="1">Interacts with UvrB in an incision complex.</text>
</comment>
<comment type="subcellular location">
    <subcellularLocation>
        <location evidence="1">Cytoplasm</location>
    </subcellularLocation>
</comment>
<comment type="similarity">
    <text evidence="1">Belongs to the UvrC family.</text>
</comment>
<name>UVRC_FRATT</name>